<proteinExistence type="inferred from homology"/>
<dbReference type="EMBL" id="BA000001">
    <property type="protein sequence ID" value="BAA30652.1"/>
    <property type="status" value="ALT_INIT"/>
    <property type="molecule type" value="Genomic_DNA"/>
</dbReference>
<dbReference type="PIR" id="D71031">
    <property type="entry name" value="D71031"/>
</dbReference>
<dbReference type="RefSeq" id="WP_048053423.1">
    <property type="nucleotide sequence ID" value="NC_000961.1"/>
</dbReference>
<dbReference type="SMR" id="O59229"/>
<dbReference type="STRING" id="70601.gene:9378527"/>
<dbReference type="EnsemblBacteria" id="BAA30652">
    <property type="protein sequence ID" value="BAA30652"/>
    <property type="gene ID" value="BAA30652"/>
</dbReference>
<dbReference type="GeneID" id="1443860"/>
<dbReference type="KEGG" id="pho:PH1542"/>
<dbReference type="eggNOG" id="arCOG04255">
    <property type="taxonomic scope" value="Archaea"/>
</dbReference>
<dbReference type="OrthoDB" id="45154at2157"/>
<dbReference type="Proteomes" id="UP000000752">
    <property type="component" value="Chromosome"/>
</dbReference>
<dbReference type="GO" id="GO:0015935">
    <property type="term" value="C:small ribosomal subunit"/>
    <property type="evidence" value="ECO:0007669"/>
    <property type="project" value="InterPro"/>
</dbReference>
<dbReference type="GO" id="GO:0019843">
    <property type="term" value="F:rRNA binding"/>
    <property type="evidence" value="ECO:0007669"/>
    <property type="project" value="UniProtKB-UniRule"/>
</dbReference>
<dbReference type="GO" id="GO:0003735">
    <property type="term" value="F:structural constituent of ribosome"/>
    <property type="evidence" value="ECO:0007669"/>
    <property type="project" value="InterPro"/>
</dbReference>
<dbReference type="GO" id="GO:0006412">
    <property type="term" value="P:translation"/>
    <property type="evidence" value="ECO:0007669"/>
    <property type="project" value="UniProtKB-UniRule"/>
</dbReference>
<dbReference type="CDD" id="cd03367">
    <property type="entry name" value="Ribosomal_S23"/>
    <property type="match status" value="1"/>
</dbReference>
<dbReference type="FunFam" id="2.40.50.140:FF:000007">
    <property type="entry name" value="40S ribosomal protein S23"/>
    <property type="match status" value="1"/>
</dbReference>
<dbReference type="Gene3D" id="2.40.50.140">
    <property type="entry name" value="Nucleic acid-binding proteins"/>
    <property type="match status" value="1"/>
</dbReference>
<dbReference type="HAMAP" id="MF_00403_A">
    <property type="entry name" value="Ribosomal_uS12_A"/>
    <property type="match status" value="1"/>
</dbReference>
<dbReference type="InterPro" id="IPR012340">
    <property type="entry name" value="NA-bd_OB-fold"/>
</dbReference>
<dbReference type="InterPro" id="IPR006032">
    <property type="entry name" value="Ribosomal_uS12"/>
</dbReference>
<dbReference type="InterPro" id="IPR022863">
    <property type="entry name" value="Ribosomal_uS12_arc"/>
</dbReference>
<dbReference type="InterPro" id="IPR005680">
    <property type="entry name" value="Ribosomal_uS12_euk/arc"/>
</dbReference>
<dbReference type="NCBIfam" id="NF003254">
    <property type="entry name" value="PRK04211.1"/>
    <property type="match status" value="1"/>
</dbReference>
<dbReference type="NCBIfam" id="TIGR00982">
    <property type="entry name" value="uS12_E_A"/>
    <property type="match status" value="1"/>
</dbReference>
<dbReference type="PANTHER" id="PTHR11652">
    <property type="entry name" value="30S RIBOSOMAL PROTEIN S12 FAMILY MEMBER"/>
    <property type="match status" value="1"/>
</dbReference>
<dbReference type="Pfam" id="PF00164">
    <property type="entry name" value="Ribosom_S12_S23"/>
    <property type="match status" value="1"/>
</dbReference>
<dbReference type="PIRSF" id="PIRSF002133">
    <property type="entry name" value="Ribosomal_S12/S23"/>
    <property type="match status" value="1"/>
</dbReference>
<dbReference type="SUPFAM" id="SSF50249">
    <property type="entry name" value="Nucleic acid-binding proteins"/>
    <property type="match status" value="1"/>
</dbReference>
<feature type="chain" id="PRO_0000146379" description="Small ribosomal subunit protein uS12">
    <location>
        <begin position="1"/>
        <end position="147"/>
    </location>
</feature>
<gene>
    <name evidence="1" type="primary">rps12</name>
    <name type="ordered locus">PH1542</name>
</gene>
<sequence>MPGKKAPNGEFAGRKLKLKRKKFRWSDIRYKRRVLRLKEKSDPLEGAPQARGIVLEKIAVEAKQPNSGMRKAVRVQLIKNGKVVTAFCPGDGAINFIDEHDEVIIEGIGGPKGGSMGDIPGIRYKVVKVNRVSLKELVKGRKEKPRR</sequence>
<reference key="1">
    <citation type="journal article" date="1998" name="DNA Res.">
        <title>Complete sequence and gene organization of the genome of a hyper-thermophilic archaebacterium, Pyrococcus horikoshii OT3.</title>
        <authorList>
            <person name="Kawarabayasi Y."/>
            <person name="Sawada M."/>
            <person name="Horikawa H."/>
            <person name="Haikawa Y."/>
            <person name="Hino Y."/>
            <person name="Yamamoto S."/>
            <person name="Sekine M."/>
            <person name="Baba S."/>
            <person name="Kosugi H."/>
            <person name="Hosoyama A."/>
            <person name="Nagai Y."/>
            <person name="Sakai M."/>
            <person name="Ogura K."/>
            <person name="Otsuka R."/>
            <person name="Nakazawa H."/>
            <person name="Takamiya M."/>
            <person name="Ohfuku Y."/>
            <person name="Funahashi T."/>
            <person name="Tanaka T."/>
            <person name="Kudoh Y."/>
            <person name="Yamazaki J."/>
            <person name="Kushida N."/>
            <person name="Oguchi A."/>
            <person name="Aoki K."/>
            <person name="Yoshizawa T."/>
            <person name="Nakamura Y."/>
            <person name="Robb F.T."/>
            <person name="Horikoshi K."/>
            <person name="Masuchi Y."/>
            <person name="Shizuya H."/>
            <person name="Kikuchi H."/>
        </authorList>
    </citation>
    <scope>NUCLEOTIDE SEQUENCE [LARGE SCALE GENOMIC DNA]</scope>
    <source>
        <strain>ATCC 700860 / DSM 12428 / JCM 9974 / NBRC 100139 / OT-3</strain>
    </source>
</reference>
<evidence type="ECO:0000255" key="1">
    <source>
        <dbReference type="HAMAP-Rule" id="MF_00403"/>
    </source>
</evidence>
<evidence type="ECO:0000305" key="2"/>
<organism>
    <name type="scientific">Pyrococcus horikoshii (strain ATCC 700860 / DSM 12428 / JCM 9974 / NBRC 100139 / OT-3)</name>
    <dbReference type="NCBI Taxonomy" id="70601"/>
    <lineage>
        <taxon>Archaea</taxon>
        <taxon>Methanobacteriati</taxon>
        <taxon>Methanobacteriota</taxon>
        <taxon>Thermococci</taxon>
        <taxon>Thermococcales</taxon>
        <taxon>Thermococcaceae</taxon>
        <taxon>Pyrococcus</taxon>
    </lineage>
</organism>
<name>RS12_PYRHO</name>
<comment type="function">
    <text evidence="1">With S4 and S5 plays an important role in translational accuracy. Located at the interface of the 30S and 50S subunits.</text>
</comment>
<comment type="subunit">
    <text evidence="1">Part of the 30S ribosomal subunit.</text>
</comment>
<comment type="similarity">
    <text evidence="1">Belongs to the universal ribosomal protein uS12 family.</text>
</comment>
<comment type="sequence caution" evidence="2">
    <conflict type="erroneous initiation">
        <sequence resource="EMBL-CDS" id="BAA30652"/>
    </conflict>
    <text>Extended N-terminus.</text>
</comment>
<protein>
    <recommendedName>
        <fullName evidence="1">Small ribosomal subunit protein uS12</fullName>
    </recommendedName>
    <alternativeName>
        <fullName evidence="2">30S ribosomal protein S12</fullName>
    </alternativeName>
</protein>
<accession>O59229</accession>
<keyword id="KW-0687">Ribonucleoprotein</keyword>
<keyword id="KW-0689">Ribosomal protein</keyword>
<keyword id="KW-0694">RNA-binding</keyword>
<keyword id="KW-0699">rRNA-binding</keyword>